<accession>P68542</accession>
<accession>P23413</accession>
<comment type="function">
    <text evidence="1">Mitochondrial membrane ATP synthase (F(1)F(0) ATP synthase or Complex V) produces ATP from ADP in the presence of a proton gradient across the membrane which is generated by electron transport complexes of the respiratory chain. F-type ATPases consist of two structural domains, F(1) - containing the extramembraneous catalytic core, and F(0) - containing the membrane proton channel, linked together by a central stalk and a peripheral stalk. During catalysis, ATP synthesis in the catalytic domain of F(1) is coupled via a rotary mechanism of the central stalk subunits to proton translocation. Subunits alpha and beta form the catalytic core in F(1). Rotation of the central stalk against the surrounding alpha(3)beta(3) subunits leads to hydrolysis of ATP in three separate catalytic sites on the beta subunits. Subunit alpha does not bear the catalytic high-affinity ATP-binding sites (By similarity).</text>
</comment>
<comment type="subunit">
    <text>F-type ATPases have 2 components, CF(1) - the catalytic core - and CF(0) - the membrane proton channel. CF(1) has five subunits: alpha(3), beta(3), gamma(1), delta(1), epsilon(1). CF(0) has three main subunits: a, b and c.</text>
</comment>
<comment type="subcellular location">
    <subcellularLocation>
        <location>Mitochondrion</location>
    </subcellularLocation>
    <subcellularLocation>
        <location>Mitochondrion inner membrane</location>
    </subcellularLocation>
    <text>Peripheral membrane protein.</text>
</comment>
<comment type="similarity">
    <text evidence="2">Belongs to the ATPase alpha/beta chains family.</text>
</comment>
<organism>
    <name type="scientific">Brassica campestris</name>
    <name type="common">Field mustard</name>
    <dbReference type="NCBI Taxonomy" id="3711"/>
    <lineage>
        <taxon>Eukaryota</taxon>
        <taxon>Viridiplantae</taxon>
        <taxon>Streptophyta</taxon>
        <taxon>Embryophyta</taxon>
        <taxon>Tracheophyta</taxon>
        <taxon>Spermatophyta</taxon>
        <taxon>Magnoliopsida</taxon>
        <taxon>eudicotyledons</taxon>
        <taxon>Gunneridae</taxon>
        <taxon>Pentapetalae</taxon>
        <taxon>rosids</taxon>
        <taxon>malvids</taxon>
        <taxon>Brassicales</taxon>
        <taxon>Brassicaceae</taxon>
        <taxon>Brassiceae</taxon>
        <taxon>Brassica</taxon>
    </lineage>
</organism>
<geneLocation type="mitochondrion"/>
<sequence>MELSPRAAELTNLFESRIRNFYANFQVDEIGRVVSVGDGIAQVYGLNEIQAGEMVLFANGVKGMALNLENENVGIVVFGGDTAIKEGDLVKRTGSIVDVPAGKAMLGRVVDAMGVPIDGRGALSDHEQRRVEVKAPGILERKSVHEPMQTGLKAVDSLVPIGRGQRELLIGDRQTGKTTIAIDTILNQKQINSRATSESETMYCVYVAIGQKRSTVGQLIQTLEEANALEYSILVAATASDPAPLQFLAPYSGCAMGEYFRDNGMHALIIYDDLSKQAVAYRQMSLLLRRPPGREAFPGDVFYLHSRLLERAAKRSDQTGAGSLTALPVIETQAGDVSAYIPTNVISITDGQICLETELFYRGIRPAINVGLSVSRVGSAAQLKAMKQVCGSSKLELAQYREVAAFAQFGSDLDAATQALLNRGARLTEVPKQPQYAPLPIEKQILVIYAAVNGFCDRMPLDRISQYEKAIPNSVKPELLQALKGGLTNERKMEPDAFLKERALALI</sequence>
<evidence type="ECO:0000250" key="1"/>
<evidence type="ECO:0000305" key="2"/>
<dbReference type="EMBL" id="AF076166">
    <property type="protein sequence ID" value="AAC78472.1"/>
    <property type="molecule type" value="Genomic_DNA"/>
</dbReference>
<dbReference type="SMR" id="P68542"/>
<dbReference type="Proteomes" id="UP000011750">
    <property type="component" value="Unplaced"/>
</dbReference>
<dbReference type="GO" id="GO:0005743">
    <property type="term" value="C:mitochondrial inner membrane"/>
    <property type="evidence" value="ECO:0007669"/>
    <property type="project" value="UniProtKB-SubCell"/>
</dbReference>
<dbReference type="GO" id="GO:0045259">
    <property type="term" value="C:proton-transporting ATP synthase complex"/>
    <property type="evidence" value="ECO:0007669"/>
    <property type="project" value="UniProtKB-KW"/>
</dbReference>
<dbReference type="GO" id="GO:0043531">
    <property type="term" value="F:ADP binding"/>
    <property type="evidence" value="ECO:0000318"/>
    <property type="project" value="GO_Central"/>
</dbReference>
<dbReference type="GO" id="GO:0005524">
    <property type="term" value="F:ATP binding"/>
    <property type="evidence" value="ECO:0000318"/>
    <property type="project" value="GO_Central"/>
</dbReference>
<dbReference type="GO" id="GO:0046933">
    <property type="term" value="F:proton-transporting ATP synthase activity, rotational mechanism"/>
    <property type="evidence" value="ECO:0007669"/>
    <property type="project" value="InterPro"/>
</dbReference>
<dbReference type="GO" id="GO:0015986">
    <property type="term" value="P:proton motive force-driven ATP synthesis"/>
    <property type="evidence" value="ECO:0000318"/>
    <property type="project" value="GO_Central"/>
</dbReference>
<dbReference type="CDD" id="cd18113">
    <property type="entry name" value="ATP-synt_F1_alpha_C"/>
    <property type="match status" value="1"/>
</dbReference>
<dbReference type="CDD" id="cd18116">
    <property type="entry name" value="ATP-synt_F1_alpha_N"/>
    <property type="match status" value="1"/>
</dbReference>
<dbReference type="CDD" id="cd01132">
    <property type="entry name" value="F1-ATPase_alpha_CD"/>
    <property type="match status" value="1"/>
</dbReference>
<dbReference type="FunFam" id="1.20.150.20:FF:000001">
    <property type="entry name" value="ATP synthase subunit alpha"/>
    <property type="match status" value="1"/>
</dbReference>
<dbReference type="FunFam" id="2.40.30.20:FF:000001">
    <property type="entry name" value="ATP synthase subunit alpha"/>
    <property type="match status" value="1"/>
</dbReference>
<dbReference type="FunFam" id="3.40.50.300:FF:002432">
    <property type="entry name" value="ATP synthase subunit alpha, mitochondrial"/>
    <property type="match status" value="1"/>
</dbReference>
<dbReference type="Gene3D" id="2.40.30.20">
    <property type="match status" value="1"/>
</dbReference>
<dbReference type="Gene3D" id="1.20.150.20">
    <property type="entry name" value="ATP synthase alpha/beta chain, C-terminal domain"/>
    <property type="match status" value="1"/>
</dbReference>
<dbReference type="Gene3D" id="3.40.50.300">
    <property type="entry name" value="P-loop containing nucleotide triphosphate hydrolases"/>
    <property type="match status" value="1"/>
</dbReference>
<dbReference type="HAMAP" id="MF_01346">
    <property type="entry name" value="ATP_synth_alpha_bact"/>
    <property type="match status" value="1"/>
</dbReference>
<dbReference type="InterPro" id="IPR023366">
    <property type="entry name" value="ATP_synth_asu-like_sf"/>
</dbReference>
<dbReference type="InterPro" id="IPR000793">
    <property type="entry name" value="ATP_synth_asu_C"/>
</dbReference>
<dbReference type="InterPro" id="IPR038376">
    <property type="entry name" value="ATP_synth_asu_C_sf"/>
</dbReference>
<dbReference type="InterPro" id="IPR033732">
    <property type="entry name" value="ATP_synth_F1_a_nt-bd_dom"/>
</dbReference>
<dbReference type="InterPro" id="IPR005294">
    <property type="entry name" value="ATP_synth_F1_asu"/>
</dbReference>
<dbReference type="InterPro" id="IPR020003">
    <property type="entry name" value="ATPase_a/bsu_AS"/>
</dbReference>
<dbReference type="InterPro" id="IPR004100">
    <property type="entry name" value="ATPase_F1/V1/A1_a/bsu_N"/>
</dbReference>
<dbReference type="InterPro" id="IPR036121">
    <property type="entry name" value="ATPase_F1/V1/A1_a/bsu_N_sf"/>
</dbReference>
<dbReference type="InterPro" id="IPR000194">
    <property type="entry name" value="ATPase_F1/V1/A1_a/bsu_nucl-bd"/>
</dbReference>
<dbReference type="InterPro" id="IPR027417">
    <property type="entry name" value="P-loop_NTPase"/>
</dbReference>
<dbReference type="NCBIfam" id="TIGR00962">
    <property type="entry name" value="atpA"/>
    <property type="match status" value="1"/>
</dbReference>
<dbReference type="NCBIfam" id="NF009884">
    <property type="entry name" value="PRK13343.1"/>
    <property type="match status" value="1"/>
</dbReference>
<dbReference type="PANTHER" id="PTHR48082">
    <property type="entry name" value="ATP SYNTHASE SUBUNIT ALPHA, MITOCHONDRIAL"/>
    <property type="match status" value="1"/>
</dbReference>
<dbReference type="PANTHER" id="PTHR48082:SF2">
    <property type="entry name" value="ATP SYNTHASE SUBUNIT ALPHA, MITOCHONDRIAL"/>
    <property type="match status" value="1"/>
</dbReference>
<dbReference type="Pfam" id="PF00006">
    <property type="entry name" value="ATP-synt_ab"/>
    <property type="match status" value="1"/>
</dbReference>
<dbReference type="Pfam" id="PF00306">
    <property type="entry name" value="ATP-synt_ab_C"/>
    <property type="match status" value="1"/>
</dbReference>
<dbReference type="Pfam" id="PF02874">
    <property type="entry name" value="ATP-synt_ab_N"/>
    <property type="match status" value="1"/>
</dbReference>
<dbReference type="PIRSF" id="PIRSF039088">
    <property type="entry name" value="F_ATPase_subunit_alpha"/>
    <property type="match status" value="1"/>
</dbReference>
<dbReference type="SUPFAM" id="SSF47917">
    <property type="entry name" value="C-terminal domain of alpha and beta subunits of F1 ATP synthase"/>
    <property type="match status" value="1"/>
</dbReference>
<dbReference type="SUPFAM" id="SSF50615">
    <property type="entry name" value="N-terminal domain of alpha and beta subunits of F1 ATP synthase"/>
    <property type="match status" value="1"/>
</dbReference>
<dbReference type="SUPFAM" id="SSF52540">
    <property type="entry name" value="P-loop containing nucleoside triphosphate hydrolases"/>
    <property type="match status" value="1"/>
</dbReference>
<dbReference type="PROSITE" id="PS00152">
    <property type="entry name" value="ATPASE_ALPHA_BETA"/>
    <property type="match status" value="1"/>
</dbReference>
<protein>
    <recommendedName>
        <fullName>ATP synthase subunit alpha, mitochondrial</fullName>
    </recommendedName>
</protein>
<keyword id="KW-0066">ATP synthesis</keyword>
<keyword id="KW-0067">ATP-binding</keyword>
<keyword id="KW-0139">CF(1)</keyword>
<keyword id="KW-0375">Hydrogen ion transport</keyword>
<keyword id="KW-0406">Ion transport</keyword>
<keyword id="KW-0472">Membrane</keyword>
<keyword id="KW-0496">Mitochondrion</keyword>
<keyword id="KW-0999">Mitochondrion inner membrane</keyword>
<keyword id="KW-0547">Nucleotide-binding</keyword>
<keyword id="KW-1185">Reference proteome</keyword>
<keyword id="KW-0813">Transport</keyword>
<reference key="1">
    <citation type="online journal article" date="1998" name="Plant Gene Register">
        <title>DNA sequence of the Brassica campestris mitochondrial atpA gene.</title>
        <authorList>
            <person name="Hammett L.A."/>
            <person name="Nielsen B.L."/>
        </authorList>
        <locator>PGR98-186</locator>
    </citation>
    <scope>NUCLEOTIDE SEQUENCE [GENOMIC DNA]</scope>
    <source>
        <strain>cv. Purple Top Golden Globe</strain>
    </source>
</reference>
<proteinExistence type="inferred from homology"/>
<name>ATPAM_BRACM</name>
<gene>
    <name type="primary">ATPA</name>
</gene>
<feature type="chain" id="PRO_0000144397" description="ATP synthase subunit alpha, mitochondrial">
    <location>
        <begin position="1"/>
        <end position="507"/>
    </location>
</feature>
<feature type="binding site" evidence="1">
    <location>
        <begin position="171"/>
        <end position="178"/>
    </location>
    <ligand>
        <name>ATP</name>
        <dbReference type="ChEBI" id="CHEBI:30616"/>
    </ligand>
</feature>
<feature type="site" description="Required for activity" evidence="1">
    <location>
        <position position="373"/>
    </location>
</feature>